<name>NADD_STAES</name>
<protein>
    <recommendedName>
        <fullName evidence="1">Probable nicotinate-nucleotide adenylyltransferase</fullName>
        <ecNumber evidence="1">2.7.7.18</ecNumber>
    </recommendedName>
    <alternativeName>
        <fullName evidence="1">Deamido-NAD(+) diphosphorylase</fullName>
    </alternativeName>
    <alternativeName>
        <fullName evidence="1">Deamido-NAD(+) pyrophosphorylase</fullName>
    </alternativeName>
    <alternativeName>
        <fullName evidence="1">Nicotinate mononucleotide adenylyltransferase</fullName>
        <shortName evidence="1">NaMN adenylyltransferase</shortName>
    </alternativeName>
</protein>
<reference key="1">
    <citation type="journal article" date="2003" name="Mol. Microbiol.">
        <title>Genome-based analysis of virulence genes in a non-biofilm-forming Staphylococcus epidermidis strain (ATCC 12228).</title>
        <authorList>
            <person name="Zhang Y.-Q."/>
            <person name="Ren S.-X."/>
            <person name="Li H.-L."/>
            <person name="Wang Y.-X."/>
            <person name="Fu G."/>
            <person name="Yang J."/>
            <person name="Qin Z.-Q."/>
            <person name="Miao Y.-G."/>
            <person name="Wang W.-Y."/>
            <person name="Chen R.-S."/>
            <person name="Shen Y."/>
            <person name="Chen Z."/>
            <person name="Yuan Z.-H."/>
            <person name="Zhao G.-P."/>
            <person name="Qu D."/>
            <person name="Danchin A."/>
            <person name="Wen Y.-M."/>
        </authorList>
    </citation>
    <scope>NUCLEOTIDE SEQUENCE [LARGE SCALE GENOMIC DNA]</scope>
    <source>
        <strain>ATCC 12228 / FDA PCI 1200</strain>
    </source>
</reference>
<comment type="function">
    <text evidence="1">Catalyzes the reversible adenylation of nicotinate mononucleotide (NaMN) to nicotinic acid adenine dinucleotide (NaAD).</text>
</comment>
<comment type="catalytic activity">
    <reaction evidence="1">
        <text>nicotinate beta-D-ribonucleotide + ATP + H(+) = deamido-NAD(+) + diphosphate</text>
        <dbReference type="Rhea" id="RHEA:22860"/>
        <dbReference type="ChEBI" id="CHEBI:15378"/>
        <dbReference type="ChEBI" id="CHEBI:30616"/>
        <dbReference type="ChEBI" id="CHEBI:33019"/>
        <dbReference type="ChEBI" id="CHEBI:57502"/>
        <dbReference type="ChEBI" id="CHEBI:58437"/>
        <dbReference type="EC" id="2.7.7.18"/>
    </reaction>
</comment>
<comment type="pathway">
    <text evidence="1">Cofactor biosynthesis; NAD(+) biosynthesis; deamido-NAD(+) from nicotinate D-ribonucleotide: step 1/1.</text>
</comment>
<comment type="similarity">
    <text evidence="1">Belongs to the NadD family.</text>
</comment>
<organism>
    <name type="scientific">Staphylococcus epidermidis (strain ATCC 12228 / FDA PCI 1200)</name>
    <dbReference type="NCBI Taxonomy" id="176280"/>
    <lineage>
        <taxon>Bacteria</taxon>
        <taxon>Bacillati</taxon>
        <taxon>Bacillota</taxon>
        <taxon>Bacilli</taxon>
        <taxon>Bacillales</taxon>
        <taxon>Staphylococcaceae</taxon>
        <taxon>Staphylococcus</taxon>
    </lineage>
</organism>
<gene>
    <name evidence="1" type="primary">nadD</name>
    <name type="ordered locus">SE_1280</name>
</gene>
<sequence>MNKKIVLFGGQFNPIHTAHLAVASEVYHAIKPDIFFFLPSYMAPLKHHNTQLYSEHRVKMIQLAIKEIGFGEICTTDLDRKGPSYTYETILHLKEIYHNAQLYFIIGTDQYNQLDKWYKINELKKLVTFIVVNRETDNQNVSKEMISIKIPRIDISSTMIRNRVRMNQSIKVLVPKRVENYIKEEGFYGDK</sequence>
<proteinExistence type="inferred from homology"/>
<evidence type="ECO:0000255" key="1">
    <source>
        <dbReference type="HAMAP-Rule" id="MF_00244"/>
    </source>
</evidence>
<keyword id="KW-0067">ATP-binding</keyword>
<keyword id="KW-0520">NAD</keyword>
<keyword id="KW-0547">Nucleotide-binding</keyword>
<keyword id="KW-0548">Nucleotidyltransferase</keyword>
<keyword id="KW-0662">Pyridine nucleotide biosynthesis</keyword>
<keyword id="KW-0808">Transferase</keyword>
<accession>Q8CSC1</accession>
<feature type="chain" id="PRO_0000181449" description="Probable nicotinate-nucleotide adenylyltransferase">
    <location>
        <begin position="1"/>
        <end position="191"/>
    </location>
</feature>
<dbReference type="EC" id="2.7.7.18" evidence="1"/>
<dbReference type="EMBL" id="AE015929">
    <property type="protein sequence ID" value="AAO04879.1"/>
    <property type="molecule type" value="Genomic_DNA"/>
</dbReference>
<dbReference type="RefSeq" id="NP_764835.1">
    <property type="nucleotide sequence ID" value="NC_004461.1"/>
</dbReference>
<dbReference type="RefSeq" id="WP_001831250.1">
    <property type="nucleotide sequence ID" value="NZ_WBME01000008.1"/>
</dbReference>
<dbReference type="SMR" id="Q8CSC1"/>
<dbReference type="KEGG" id="sep:SE_1280"/>
<dbReference type="PATRIC" id="fig|176280.10.peg.1249"/>
<dbReference type="eggNOG" id="COG1057">
    <property type="taxonomic scope" value="Bacteria"/>
</dbReference>
<dbReference type="HOGENOM" id="CLU_069765_3_1_9"/>
<dbReference type="OrthoDB" id="5295945at2"/>
<dbReference type="UniPathway" id="UPA00253">
    <property type="reaction ID" value="UER00332"/>
</dbReference>
<dbReference type="Proteomes" id="UP000001411">
    <property type="component" value="Chromosome"/>
</dbReference>
<dbReference type="GO" id="GO:0005524">
    <property type="term" value="F:ATP binding"/>
    <property type="evidence" value="ECO:0007669"/>
    <property type="project" value="UniProtKB-KW"/>
</dbReference>
<dbReference type="GO" id="GO:0004515">
    <property type="term" value="F:nicotinate-nucleotide adenylyltransferase activity"/>
    <property type="evidence" value="ECO:0007669"/>
    <property type="project" value="UniProtKB-UniRule"/>
</dbReference>
<dbReference type="GO" id="GO:0009435">
    <property type="term" value="P:NAD biosynthetic process"/>
    <property type="evidence" value="ECO:0007669"/>
    <property type="project" value="UniProtKB-UniRule"/>
</dbReference>
<dbReference type="CDD" id="cd02165">
    <property type="entry name" value="NMNAT"/>
    <property type="match status" value="1"/>
</dbReference>
<dbReference type="Gene3D" id="3.40.50.620">
    <property type="entry name" value="HUPs"/>
    <property type="match status" value="1"/>
</dbReference>
<dbReference type="HAMAP" id="MF_00244">
    <property type="entry name" value="NaMN_adenylyltr"/>
    <property type="match status" value="1"/>
</dbReference>
<dbReference type="InterPro" id="IPR004821">
    <property type="entry name" value="Cyt_trans-like"/>
</dbReference>
<dbReference type="InterPro" id="IPR005248">
    <property type="entry name" value="NadD/NMNAT"/>
</dbReference>
<dbReference type="InterPro" id="IPR014729">
    <property type="entry name" value="Rossmann-like_a/b/a_fold"/>
</dbReference>
<dbReference type="NCBIfam" id="TIGR00482">
    <property type="entry name" value="nicotinate (nicotinamide) nucleotide adenylyltransferase"/>
    <property type="match status" value="1"/>
</dbReference>
<dbReference type="NCBIfam" id="NF000840">
    <property type="entry name" value="PRK00071.1-3"/>
    <property type="match status" value="1"/>
</dbReference>
<dbReference type="NCBIfam" id="NF000841">
    <property type="entry name" value="PRK00071.1-4"/>
    <property type="match status" value="1"/>
</dbReference>
<dbReference type="PANTHER" id="PTHR39321">
    <property type="entry name" value="NICOTINATE-NUCLEOTIDE ADENYLYLTRANSFERASE-RELATED"/>
    <property type="match status" value="1"/>
</dbReference>
<dbReference type="PANTHER" id="PTHR39321:SF3">
    <property type="entry name" value="PHOSPHOPANTETHEINE ADENYLYLTRANSFERASE"/>
    <property type="match status" value="1"/>
</dbReference>
<dbReference type="Pfam" id="PF01467">
    <property type="entry name" value="CTP_transf_like"/>
    <property type="match status" value="1"/>
</dbReference>
<dbReference type="SUPFAM" id="SSF52374">
    <property type="entry name" value="Nucleotidylyl transferase"/>
    <property type="match status" value="1"/>
</dbReference>